<evidence type="ECO:0000250" key="1">
    <source>
        <dbReference type="UniProtKB" id="E0TU96"/>
    </source>
</evidence>
<evidence type="ECO:0000255" key="2"/>
<evidence type="ECO:0000255" key="3">
    <source>
        <dbReference type="PROSITE-ProRule" id="PRU01092"/>
    </source>
</evidence>
<evidence type="ECO:0000256" key="4">
    <source>
        <dbReference type="SAM" id="MobiDB-lite"/>
    </source>
</evidence>
<evidence type="ECO:0000269" key="5">
    <source>
    </source>
</evidence>
<evidence type="ECO:0000269" key="6">
    <source>
    </source>
</evidence>
<evidence type="ECO:0000269" key="7">
    <source>
    </source>
</evidence>
<evidence type="ECO:0000303" key="8">
    <source>
    </source>
</evidence>
<evidence type="ECO:0000303" key="9">
    <source>
    </source>
</evidence>
<evidence type="ECO:0000305" key="10"/>
<evidence type="ECO:0000305" key="11">
    <source>
    </source>
</evidence>
<dbReference type="EMBL" id="AF012532">
    <property type="protein sequence ID" value="AAB66479.1"/>
    <property type="status" value="ALT_FRAME"/>
    <property type="molecule type" value="Genomic_DNA"/>
</dbReference>
<dbReference type="EMBL" id="AL009126">
    <property type="protein sequence ID" value="CAB12501.2"/>
    <property type="molecule type" value="Genomic_DNA"/>
</dbReference>
<dbReference type="PIR" id="A69793">
    <property type="entry name" value="A69793"/>
</dbReference>
<dbReference type="RefSeq" id="NP_388563.2">
    <property type="nucleotide sequence ID" value="NC_000964.3"/>
</dbReference>
<dbReference type="RefSeq" id="WP_003242909.1">
    <property type="nucleotide sequence ID" value="NZ_OZ025638.1"/>
</dbReference>
<dbReference type="SMR" id="O31506"/>
<dbReference type="FunCoup" id="O31506">
    <property type="interactions" value="2"/>
</dbReference>
<dbReference type="IntAct" id="O31506">
    <property type="interactions" value="1"/>
</dbReference>
<dbReference type="MINT" id="O31506"/>
<dbReference type="STRING" id="224308.BSU06812"/>
<dbReference type="PaxDb" id="224308-BSU06812"/>
<dbReference type="EnsemblBacteria" id="CAB12501">
    <property type="protein sequence ID" value="CAB12501"/>
    <property type="gene ID" value="BSU_06812"/>
</dbReference>
<dbReference type="GeneID" id="938753"/>
<dbReference type="KEGG" id="bsu:BSU06812"/>
<dbReference type="PATRIC" id="fig|224308.179.peg.740"/>
<dbReference type="eggNOG" id="COG5444">
    <property type="taxonomic scope" value="Bacteria"/>
</dbReference>
<dbReference type="InParanoid" id="O31506"/>
<dbReference type="OrthoDB" id="7182479at2"/>
<dbReference type="PhylomeDB" id="O31506"/>
<dbReference type="BioCyc" id="BSUB:BSU06812-MONOMER"/>
<dbReference type="Proteomes" id="UP000001570">
    <property type="component" value="Chromosome"/>
</dbReference>
<dbReference type="GO" id="GO:0045121">
    <property type="term" value="C:membrane raft"/>
    <property type="evidence" value="ECO:0007669"/>
    <property type="project" value="UniProtKB-SubCell"/>
</dbReference>
<dbReference type="GO" id="GO:0005886">
    <property type="term" value="C:plasma membrane"/>
    <property type="evidence" value="ECO:0007669"/>
    <property type="project" value="UniProtKB-SubCell"/>
</dbReference>
<dbReference type="GO" id="GO:0003677">
    <property type="term" value="F:DNA binding"/>
    <property type="evidence" value="ECO:0007669"/>
    <property type="project" value="UniProtKB-KW"/>
</dbReference>
<dbReference type="GO" id="GO:0004518">
    <property type="term" value="F:nuclease activity"/>
    <property type="evidence" value="ECO:0007669"/>
    <property type="project" value="UniProtKB-KW"/>
</dbReference>
<dbReference type="GO" id="GO:0090729">
    <property type="term" value="F:toxin activity"/>
    <property type="evidence" value="ECO:0007669"/>
    <property type="project" value="UniProtKB-KW"/>
</dbReference>
<dbReference type="Gene3D" id="3.40.570.10">
    <property type="entry name" value="Extracellular Endonuclease, subunit A"/>
    <property type="match status" value="1"/>
</dbReference>
<dbReference type="InterPro" id="IPR051768">
    <property type="entry name" value="Bact_secretion_toxin"/>
</dbReference>
<dbReference type="InterPro" id="IPR044929">
    <property type="entry name" value="DNA/RNA_non-sp_Endonuclease_sf"/>
</dbReference>
<dbReference type="InterPro" id="IPR044927">
    <property type="entry name" value="Endonuclea_NS_2"/>
</dbReference>
<dbReference type="InterPro" id="IPR006829">
    <property type="entry name" value="LXG_dom"/>
</dbReference>
<dbReference type="PANTHER" id="PTHR34976">
    <property type="entry name" value="RIBONUCLEASE YQCG-RELATED"/>
    <property type="match status" value="1"/>
</dbReference>
<dbReference type="PANTHER" id="PTHR34976:SF2">
    <property type="entry name" value="TYPE VII SECRETION SYSTEM PROTEIN ESSD"/>
    <property type="match status" value="1"/>
</dbReference>
<dbReference type="Pfam" id="PF13930">
    <property type="entry name" value="Endonuclea_NS_2"/>
    <property type="match status" value="1"/>
</dbReference>
<dbReference type="Pfam" id="PF04740">
    <property type="entry name" value="LXG"/>
    <property type="match status" value="1"/>
</dbReference>
<dbReference type="PROSITE" id="PS51756">
    <property type="entry name" value="LXG"/>
    <property type="match status" value="1"/>
</dbReference>
<comment type="function">
    <text evidence="1 7">Toxic component of one of 6 LXG toxin-immunity modules in this strain. They promote kin selection, mediate competition in biofilms, and drive spatial segregation of different strains, indicating that LXG toxins may help avoid warfare between strains in biofilms. Mediates intercellular competition during biofilm formation; disruption of the operon disadvantages the bacteria, but overexpression of the cognate immunity protein restores growth in competition with wild-type. Overexpression alone in situ causes growth arrest but not cell lysis, a large decrease in chromosomal DNA content and the production of anucleate cells. No effect is seen on rRNA. Co-overexpression with cognate immunity protein YezG does not cause growth arrest. The toxic effect is dependent on the epsA and tapA operons which are required for biofilm formation (PubMed:34280190). Binds DNA in the presence and absence of YezG (By similarity).</text>
</comment>
<comment type="subunit">
    <text evidence="5">Interacts with cognate immunity protein YezG but not with non-cognate immunity protein YobK. The interaction probably inhibits the toxic activity of YeeF.</text>
</comment>
<comment type="subcellular location">
    <subcellularLocation>
        <location evidence="6">Cell membrane</location>
    </subcellularLocation>
    <subcellularLocation>
        <location evidence="6">Membrane raft</location>
    </subcellularLocation>
    <text evidence="6 7">Present in detergent-resistant membrane (DRM) fractions that may be equivalent to eukaryotic membrane rafts; these rafts include proteins involved in signaling, molecule trafficking and protein secretion (PubMed:22882210). Delivery to target cells requires the type VII secretion system (T7SS) and YukE (PubMed:34280190).</text>
</comment>
<comment type="induction">
    <text evidence="7">Expressed on rich and minimal solid media likely in early stationary phase; dependent on DegSU. Not expressed in liquid LB, but only under conditions that promote biofilm formation.</text>
</comment>
<comment type="disruption phenotype">
    <text evidence="7">Deletion of the yeeF-yezG operon has no visible growth phenotype, however it is out-competed by wild-type cells.</text>
</comment>
<comment type="similarity">
    <text evidence="8">In the N-terminal section; belongs to the LXG family.</text>
</comment>
<comment type="caution">
    <text evidence="11">Was originally suggested to be an RNase.</text>
</comment>
<comment type="sequence caution" evidence="10">
    <conflict type="frameshift">
        <sequence resource="EMBL-CDS" id="AAB66479"/>
    </conflict>
</comment>
<proteinExistence type="evidence at protein level"/>
<gene>
    <name type="primary">yeeF</name>
    <name type="ordered locus">BSU06810</name>
</gene>
<accession>O31506</accession>
<accession>O30581</accession>
<name>YEEF_BACSU</name>
<feature type="chain" id="PRO_0000360798" description="Toxin YeeF">
    <location>
        <begin position="1"/>
        <end position="669"/>
    </location>
</feature>
<feature type="domain" description="LXG" evidence="3">
    <location>
        <begin position="1"/>
        <end position="235"/>
    </location>
</feature>
<feature type="region of interest" description="Disordered" evidence="4">
    <location>
        <begin position="561"/>
        <end position="580"/>
    </location>
</feature>
<feature type="coiled-coil region" evidence="2">
    <location>
        <begin position="2"/>
        <end position="39"/>
    </location>
</feature>
<feature type="coiled-coil region" evidence="2">
    <location>
        <begin position="100"/>
        <end position="171"/>
    </location>
</feature>
<feature type="coiled-coil region" evidence="2">
    <location>
        <begin position="226"/>
        <end position="258"/>
    </location>
</feature>
<feature type="compositionally biased region" description="Basic and acidic residues" evidence="4">
    <location>
        <begin position="570"/>
        <end position="580"/>
    </location>
</feature>
<feature type="sequence conflict" description="In Ref. 1; AAB66479." evidence="10" ref="1">
    <original>HDH</original>
    <variation>TTN</variation>
    <location>
        <begin position="58"/>
        <end position="60"/>
    </location>
</feature>
<feature type="sequence conflict" description="In Ref. 1; AAB66479." evidence="10" ref="1">
    <original>Q</original>
    <variation>R</variation>
    <location>
        <position position="66"/>
    </location>
</feature>
<feature type="sequence conflict" description="In Ref. 1; AAB66479." evidence="10" ref="1">
    <original>KGDIEK</original>
    <variation>RRHLKR</variation>
    <location>
        <begin position="218"/>
        <end position="223"/>
    </location>
</feature>
<reference key="1">
    <citation type="submission" date="1997-07" db="EMBL/GenBank/DDBJ databases">
        <title>The 55-58 degree segment of the Bacillus subtilis chromosome, a region spanning from the purA gene cluster to the cotJ operon.</title>
        <authorList>
            <person name="Borriss R."/>
            <person name="Schroeter R."/>
        </authorList>
    </citation>
    <scope>NUCLEOTIDE SEQUENCE [GENOMIC DNA]</scope>
    <source>
        <strain>168</strain>
    </source>
</reference>
<reference key="2">
    <citation type="journal article" date="1997" name="Nature">
        <title>The complete genome sequence of the Gram-positive bacterium Bacillus subtilis.</title>
        <authorList>
            <person name="Kunst F."/>
            <person name="Ogasawara N."/>
            <person name="Moszer I."/>
            <person name="Albertini A.M."/>
            <person name="Alloni G."/>
            <person name="Azevedo V."/>
            <person name="Bertero M.G."/>
            <person name="Bessieres P."/>
            <person name="Bolotin A."/>
            <person name="Borchert S."/>
            <person name="Borriss R."/>
            <person name="Boursier L."/>
            <person name="Brans A."/>
            <person name="Braun M."/>
            <person name="Brignell S.C."/>
            <person name="Bron S."/>
            <person name="Brouillet S."/>
            <person name="Bruschi C.V."/>
            <person name="Caldwell B."/>
            <person name="Capuano V."/>
            <person name="Carter N.M."/>
            <person name="Choi S.-K."/>
            <person name="Codani J.-J."/>
            <person name="Connerton I.F."/>
            <person name="Cummings N.J."/>
            <person name="Daniel R.A."/>
            <person name="Denizot F."/>
            <person name="Devine K.M."/>
            <person name="Duesterhoeft A."/>
            <person name="Ehrlich S.D."/>
            <person name="Emmerson P.T."/>
            <person name="Entian K.-D."/>
            <person name="Errington J."/>
            <person name="Fabret C."/>
            <person name="Ferrari E."/>
            <person name="Foulger D."/>
            <person name="Fritz C."/>
            <person name="Fujita M."/>
            <person name="Fujita Y."/>
            <person name="Fuma S."/>
            <person name="Galizzi A."/>
            <person name="Galleron N."/>
            <person name="Ghim S.-Y."/>
            <person name="Glaser P."/>
            <person name="Goffeau A."/>
            <person name="Golightly E.J."/>
            <person name="Grandi G."/>
            <person name="Guiseppi G."/>
            <person name="Guy B.J."/>
            <person name="Haga K."/>
            <person name="Haiech J."/>
            <person name="Harwood C.R."/>
            <person name="Henaut A."/>
            <person name="Hilbert H."/>
            <person name="Holsappel S."/>
            <person name="Hosono S."/>
            <person name="Hullo M.-F."/>
            <person name="Itaya M."/>
            <person name="Jones L.-M."/>
            <person name="Joris B."/>
            <person name="Karamata D."/>
            <person name="Kasahara Y."/>
            <person name="Klaerr-Blanchard M."/>
            <person name="Klein C."/>
            <person name="Kobayashi Y."/>
            <person name="Koetter P."/>
            <person name="Koningstein G."/>
            <person name="Krogh S."/>
            <person name="Kumano M."/>
            <person name="Kurita K."/>
            <person name="Lapidus A."/>
            <person name="Lardinois S."/>
            <person name="Lauber J."/>
            <person name="Lazarevic V."/>
            <person name="Lee S.-M."/>
            <person name="Levine A."/>
            <person name="Liu H."/>
            <person name="Masuda S."/>
            <person name="Mauel C."/>
            <person name="Medigue C."/>
            <person name="Medina N."/>
            <person name="Mellado R.P."/>
            <person name="Mizuno M."/>
            <person name="Moestl D."/>
            <person name="Nakai S."/>
            <person name="Noback M."/>
            <person name="Noone D."/>
            <person name="O'Reilly M."/>
            <person name="Ogawa K."/>
            <person name="Ogiwara A."/>
            <person name="Oudega B."/>
            <person name="Park S.-H."/>
            <person name="Parro V."/>
            <person name="Pohl T.M."/>
            <person name="Portetelle D."/>
            <person name="Porwollik S."/>
            <person name="Prescott A.M."/>
            <person name="Presecan E."/>
            <person name="Pujic P."/>
            <person name="Purnelle B."/>
            <person name="Rapoport G."/>
            <person name="Rey M."/>
            <person name="Reynolds S."/>
            <person name="Rieger M."/>
            <person name="Rivolta C."/>
            <person name="Rocha E."/>
            <person name="Roche B."/>
            <person name="Rose M."/>
            <person name="Sadaie Y."/>
            <person name="Sato T."/>
            <person name="Scanlan E."/>
            <person name="Schleich S."/>
            <person name="Schroeter R."/>
            <person name="Scoffone F."/>
            <person name="Sekiguchi J."/>
            <person name="Sekowska A."/>
            <person name="Seror S.J."/>
            <person name="Serror P."/>
            <person name="Shin B.-S."/>
            <person name="Soldo B."/>
            <person name="Sorokin A."/>
            <person name="Tacconi E."/>
            <person name="Takagi T."/>
            <person name="Takahashi H."/>
            <person name="Takemaru K."/>
            <person name="Takeuchi M."/>
            <person name="Tamakoshi A."/>
            <person name="Tanaka T."/>
            <person name="Terpstra P."/>
            <person name="Tognoni A."/>
            <person name="Tosato V."/>
            <person name="Uchiyama S."/>
            <person name="Vandenbol M."/>
            <person name="Vannier F."/>
            <person name="Vassarotti A."/>
            <person name="Viari A."/>
            <person name="Wambutt R."/>
            <person name="Wedler E."/>
            <person name="Wedler H."/>
            <person name="Weitzenegger T."/>
            <person name="Winters P."/>
            <person name="Wipat A."/>
            <person name="Yamamoto H."/>
            <person name="Yamane K."/>
            <person name="Yasumoto K."/>
            <person name="Yata K."/>
            <person name="Yoshida K."/>
            <person name="Yoshikawa H.-F."/>
            <person name="Zumstein E."/>
            <person name="Yoshikawa H."/>
            <person name="Danchin A."/>
        </authorList>
    </citation>
    <scope>NUCLEOTIDE SEQUENCE [LARGE SCALE GENOMIC DNA]</scope>
    <source>
        <strain>168</strain>
    </source>
</reference>
<reference key="3">
    <citation type="journal article" date="2009" name="Microbiology">
        <title>From a consortium sequence to a unified sequence: the Bacillus subtilis 168 reference genome a decade later.</title>
        <authorList>
            <person name="Barbe V."/>
            <person name="Cruveiller S."/>
            <person name="Kunst F."/>
            <person name="Lenoble P."/>
            <person name="Meurice G."/>
            <person name="Sekowska A."/>
            <person name="Vallenet D."/>
            <person name="Wang T."/>
            <person name="Moszer I."/>
            <person name="Medigue C."/>
            <person name="Danchin A."/>
        </authorList>
    </citation>
    <scope>SEQUENCE REVISION TO 58-60; 66; 218-223 AND C-TERMINUS</scope>
</reference>
<reference key="4">
    <citation type="journal article" date="2012" name="FEBS Lett.">
        <title>A novel family of toxin/antitoxin proteins in Bacillus species.</title>
        <authorList>
            <person name="Holberger L.E."/>
            <person name="Garza-Sanchez F."/>
            <person name="Lamoureux J."/>
            <person name="Low D.A."/>
            <person name="Hayes C.S."/>
        </authorList>
    </citation>
    <scope>IDENTIFICATION OF TOXIN-IMMUNITY PAIR</scope>
    <scope>INTERACTION WITH YEZG</scope>
    <source>
        <strain>168</strain>
    </source>
</reference>
<reference key="5">
    <citation type="journal article" date="2012" name="Mol. Microbiol.">
        <title>The biofilm formation defect of a Bacillus subtilis flotillin-defective mutant involves the protease FtsH.</title>
        <authorList>
            <person name="Yepes A."/>
            <person name="Schneider J."/>
            <person name="Mielich B."/>
            <person name="Koch G."/>
            <person name="Garcia-Betancur J.C."/>
            <person name="Ramamurthi K.S."/>
            <person name="Vlamakis H."/>
            <person name="Lopez D."/>
        </authorList>
    </citation>
    <scope>SUBCELLULAR LOCATION</scope>
    <source>
        <strain>168 / Marburg / ATCC 6051 / DSM 10 / JCM 1465 / NBRC 13719 / NCIMB 3610 / NRRL NRS-744 / VKM B-501</strain>
    </source>
</reference>
<reference key="6">
    <citation type="journal article" date="2021" name="PLoS Genet.">
        <title>Diverse LXG toxin and antitoxin systems specifically mediate intraspecies competition in Bacillus subtilis biofilms.</title>
        <authorList>
            <person name="Kobayashi K."/>
        </authorList>
    </citation>
    <scope>FUNCTION AS A TOXIN</scope>
    <scope>FUNCTION AS A DNASE</scope>
    <scope>SUBCELLULAR LOCATION</scope>
    <scope>INDUCTION</scope>
    <scope>DISRUPTION PHENOTYPE</scope>
    <source>
        <strain>168 / Marburg / ATCC 6051 / DSM 10 / JCM 1465 / NBRC 13719 / NCIMB 3610 / NRRL NRS-744 / VKM B-501</strain>
    </source>
</reference>
<sequence>MKVFEAKTLLSEATDRAKEYKELRTQMVNLRKALKGVADLSDSEFSGKGASNIKAFYHDHVGVADQWIDYIDMKIAFFNSIAGAAEDKGLSDAYIEESFLEHELANANKKSKSIMSEQKKAMKDILNDIDDILPLDLFSTETFKDELADANDKRKKTLEKLDALDEDLKTEYALSEPNEQFIKSDFQKLQEATGKGKNATPIHYNAKAYRESDIHKKKGDIEKRTEAYLKIKKEEAKEREIEKLKERLKNYDYADADEFYEMAKTIGYENLTAEQQRYFTQIENTRELEAGFKGVAVGLYDSGKDAVVGLWDMVTDPGGTVEAITGAMAHPIKTYEAISAAIEESYQKDMVNGDTYSRARWVSYAVGTVVTSIVGTKGVGAVSKTGTAAKVTTKVKTAASKSATAQKAITVSKQTVDHIKQKVNTGIEVSKKHVKTKLNQIGDLTLADILPYHPRHDLVPAGVPYNAVNGVTLKEGLQKFAKVILPKPYGTSSSGRRTPAPHVPPVTVKYGEHFARWSRKKVLKPNIIYKTKEGYTYTTDNYGRITSVKADLQLGEAKRNQYAQTNAGKPQDRKPDDDGGHLIATQFKGSGQFDNIVPMNSQINRSGGKWYEMEQEWAKALSKKPPKKVAVQIEPVYSGDSLRPSYFDVTYKIGSRKEISVSIKNQPGG</sequence>
<protein>
    <recommendedName>
        <fullName evidence="9">Toxin YeeF</fullName>
    </recommendedName>
    <alternativeName>
        <fullName evidence="9">DNase YeeF</fullName>
    </alternativeName>
</protein>
<organism>
    <name type="scientific">Bacillus subtilis (strain 168)</name>
    <dbReference type="NCBI Taxonomy" id="224308"/>
    <lineage>
        <taxon>Bacteria</taxon>
        <taxon>Bacillati</taxon>
        <taxon>Bacillota</taxon>
        <taxon>Bacilli</taxon>
        <taxon>Bacillales</taxon>
        <taxon>Bacillaceae</taxon>
        <taxon>Bacillus</taxon>
    </lineage>
</organism>
<keyword id="KW-1003">Cell membrane</keyword>
<keyword id="KW-0175">Coiled coil</keyword>
<keyword id="KW-0238">DNA-binding</keyword>
<keyword id="KW-0378">Hydrolase</keyword>
<keyword id="KW-0472">Membrane</keyword>
<keyword id="KW-0540">Nuclease</keyword>
<keyword id="KW-1185">Reference proteome</keyword>
<keyword id="KW-0800">Toxin</keyword>